<protein>
    <recommendedName>
        <fullName evidence="11">Two pore calcium channel protein 1</fullName>
    </recommendedName>
    <alternativeName>
        <fullName>Voltage-dependent calcium channel protein TPC1</fullName>
    </alternativeName>
</protein>
<evidence type="ECO:0000250" key="1">
    <source>
        <dbReference type="UniProtKB" id="Q8NHX9"/>
    </source>
</evidence>
<evidence type="ECO:0000250" key="2">
    <source>
        <dbReference type="UniProtKB" id="Q9ULQ1"/>
    </source>
</evidence>
<evidence type="ECO:0000255" key="3"/>
<evidence type="ECO:0000256" key="4">
    <source>
        <dbReference type="SAM" id="MobiDB-lite"/>
    </source>
</evidence>
<evidence type="ECO:0000269" key="5">
    <source>
    </source>
</evidence>
<evidence type="ECO:0000269" key="6">
    <source>
    </source>
</evidence>
<evidence type="ECO:0000269" key="7">
    <source>
    </source>
</evidence>
<evidence type="ECO:0000269" key="8">
    <source>
    </source>
</evidence>
<evidence type="ECO:0000303" key="9">
    <source>
    </source>
</evidence>
<evidence type="ECO:0000303" key="10">
    <source>
    </source>
</evidence>
<evidence type="ECO:0000305" key="11"/>
<evidence type="ECO:0000312" key="12">
    <source>
        <dbReference type="MGI" id="MGI:2182472"/>
    </source>
</evidence>
<evidence type="ECO:0007829" key="13">
    <source>
        <dbReference type="PDB" id="6C96"/>
    </source>
</evidence>
<evidence type="ECO:0007829" key="14">
    <source>
        <dbReference type="PDB" id="6C9A"/>
    </source>
</evidence>
<feature type="chain" id="PRO_0000276854" description="Two pore calcium channel protein 1">
    <location>
        <begin position="1"/>
        <end position="817"/>
    </location>
</feature>
<feature type="topological domain" description="Cytoplasmic" evidence="3">
    <location>
        <begin position="1"/>
        <end position="113"/>
    </location>
</feature>
<feature type="transmembrane region" description="Helical; Name=S1 of repeat I" evidence="3">
    <location>
        <begin position="114"/>
        <end position="134"/>
    </location>
</feature>
<feature type="topological domain" description="Extracellular" evidence="3">
    <location>
        <begin position="135"/>
        <end position="137"/>
    </location>
</feature>
<feature type="transmembrane region" description="Helical; Name=S2 of repeat I" evidence="3">
    <location>
        <begin position="138"/>
        <end position="158"/>
    </location>
</feature>
<feature type="topological domain" description="Cytoplasmic" evidence="3">
    <location>
        <begin position="159"/>
        <end position="172"/>
    </location>
</feature>
<feature type="transmembrane region" description="Helical; Name=S3 of repeat I" evidence="3">
    <location>
        <begin position="173"/>
        <end position="193"/>
    </location>
</feature>
<feature type="topological domain" description="Extracellular" evidence="3">
    <location>
        <begin position="194"/>
        <end position="202"/>
    </location>
</feature>
<feature type="transmembrane region" description="Helical; Name=S4 of repeat I" evidence="3">
    <location>
        <begin position="203"/>
        <end position="221"/>
    </location>
</feature>
<feature type="topological domain" description="Cytoplasmic" evidence="3">
    <location>
        <begin position="222"/>
        <end position="235"/>
    </location>
</feature>
<feature type="transmembrane region" description="Helical; Name=S5 of repeat I" evidence="3">
    <location>
        <begin position="236"/>
        <end position="256"/>
    </location>
</feature>
<feature type="topological domain" description="Extracellular" evidence="3">
    <location>
        <begin position="257"/>
        <end position="263"/>
    </location>
</feature>
<feature type="intramembrane region" description="Helical; Pore-forming" evidence="3">
    <location>
        <begin position="264"/>
        <end position="287"/>
    </location>
</feature>
<feature type="topological domain" description="Extracellular" evidence="3">
    <location>
        <begin position="288"/>
        <end position="298"/>
    </location>
</feature>
<feature type="transmembrane region" description="Helical; Name=S6 of repeat I" evidence="3">
    <location>
        <begin position="299"/>
        <end position="319"/>
    </location>
</feature>
<feature type="topological domain" description="Cytoplasmic" evidence="3">
    <location>
        <begin position="320"/>
        <end position="445"/>
    </location>
</feature>
<feature type="transmembrane region" description="Helical; Name=S1 of repeat II" evidence="3">
    <location>
        <begin position="446"/>
        <end position="466"/>
    </location>
</feature>
<feature type="topological domain" description="Extracellular" evidence="3">
    <location>
        <begin position="467"/>
        <end position="480"/>
    </location>
</feature>
<feature type="transmembrane region" description="Helical; Name=S2 of repeat II" evidence="3">
    <location>
        <begin position="481"/>
        <end position="501"/>
    </location>
</feature>
<feature type="topological domain" description="Cytoplasmic" evidence="3">
    <location>
        <begin position="502"/>
        <end position="504"/>
    </location>
</feature>
<feature type="transmembrane region" description="Helical; Name=S3 of repeat II" evidence="3">
    <location>
        <begin position="505"/>
        <end position="527"/>
    </location>
</feature>
<feature type="topological domain" description="Extracellular" evidence="3">
    <location>
        <begin position="528"/>
        <end position="535"/>
    </location>
</feature>
<feature type="transmembrane region" description="Helical; Name=S4 of repeat II" evidence="3">
    <location>
        <begin position="536"/>
        <end position="550"/>
    </location>
</feature>
<feature type="topological domain" description="Cytoplasmic" evidence="3">
    <location>
        <begin position="551"/>
        <end position="569"/>
    </location>
</feature>
<feature type="transmembrane region" description="Helical; Name=S5 of repeat II" evidence="3">
    <location>
        <begin position="570"/>
        <end position="590"/>
    </location>
</feature>
<feature type="topological domain" description="Extracellular" evidence="3">
    <location>
        <begin position="591"/>
        <end position="630"/>
    </location>
</feature>
<feature type="intramembrane region" description="Helical; Pore-forming" evidence="3">
    <location>
        <begin position="631"/>
        <end position="654"/>
    </location>
</feature>
<feature type="topological domain" description="Extracellular" evidence="3">
    <location>
        <begin position="655"/>
        <end position="671"/>
    </location>
</feature>
<feature type="transmembrane region" description="Helical; Name=S6 of repeat II" evidence="3">
    <location>
        <begin position="672"/>
        <end position="692"/>
    </location>
</feature>
<feature type="topological domain" description="Cytoplasmic" evidence="3">
    <location>
        <begin position="693"/>
        <end position="817"/>
    </location>
</feature>
<feature type="region of interest" description="Disordered" evidence="4">
    <location>
        <begin position="20"/>
        <end position="65"/>
    </location>
</feature>
<feature type="region of interest" description="Disordered" evidence="4">
    <location>
        <begin position="785"/>
        <end position="817"/>
    </location>
</feature>
<feature type="coiled-coil region" evidence="3">
    <location>
        <begin position="770"/>
        <end position="794"/>
    </location>
</feature>
<feature type="compositionally biased region" description="Polar residues" evidence="4">
    <location>
        <begin position="26"/>
        <end position="51"/>
    </location>
</feature>
<feature type="compositionally biased region" description="Polar residues" evidence="4">
    <location>
        <begin position="806"/>
        <end position="817"/>
    </location>
</feature>
<feature type="glycosylation site" description="N-linked (GlcNAc...) asparagine" evidence="3">
    <location>
        <position position="470"/>
    </location>
</feature>
<feature type="splice variant" id="VSP_023006" description="In isoform 2." evidence="9">
    <original>YLVVAVNGVWILVETFMLKGGNFTSKHVPWSYLVFLTIYG</original>
    <variation>CKCDPSQLWAPVLLSPSFLKVERQTIQKTPSTGFCPQYFS</variation>
    <location>
        <begin position="449"/>
        <end position="488"/>
    </location>
</feature>
<feature type="splice variant" id="VSP_023007" description="In isoform 2." evidence="9">
    <location>
        <begin position="489"/>
        <end position="817"/>
    </location>
</feature>
<feature type="helix" evidence="14">
    <location>
        <begin position="68"/>
        <end position="83"/>
    </location>
</feature>
<feature type="helix" evidence="14">
    <location>
        <begin position="88"/>
        <end position="90"/>
    </location>
</feature>
<feature type="helix" evidence="14">
    <location>
        <begin position="95"/>
        <end position="104"/>
    </location>
</feature>
<feature type="strand" evidence="14">
    <location>
        <begin position="105"/>
        <end position="107"/>
    </location>
</feature>
<feature type="helix" evidence="14">
    <location>
        <begin position="108"/>
        <end position="123"/>
    </location>
</feature>
<feature type="strand" evidence="14">
    <location>
        <begin position="126"/>
        <end position="129"/>
    </location>
</feature>
<feature type="strand" evidence="13">
    <location>
        <begin position="132"/>
        <end position="134"/>
    </location>
</feature>
<feature type="helix" evidence="14">
    <location>
        <begin position="138"/>
        <end position="162"/>
    </location>
</feature>
<feature type="helix" evidence="14">
    <location>
        <begin position="165"/>
        <end position="169"/>
    </location>
</feature>
<feature type="helix" evidence="14">
    <location>
        <begin position="172"/>
        <end position="194"/>
    </location>
</feature>
<feature type="helix" evidence="14">
    <location>
        <begin position="202"/>
        <end position="207"/>
    </location>
</feature>
<feature type="helix" evidence="14">
    <location>
        <begin position="208"/>
        <end position="211"/>
    </location>
</feature>
<feature type="helix" evidence="14">
    <location>
        <begin position="217"/>
        <end position="228"/>
    </location>
</feature>
<feature type="helix" evidence="14">
    <location>
        <begin position="231"/>
        <end position="255"/>
    </location>
</feature>
<feature type="strand" evidence="14">
    <location>
        <begin position="262"/>
        <end position="266"/>
    </location>
</feature>
<feature type="helix" evidence="14">
    <location>
        <begin position="267"/>
        <end position="278"/>
    </location>
</feature>
<feature type="helix" evidence="14">
    <location>
        <begin position="283"/>
        <end position="291"/>
    </location>
</feature>
<feature type="helix" evidence="14">
    <location>
        <begin position="295"/>
        <end position="297"/>
    </location>
</feature>
<feature type="helix" evidence="14">
    <location>
        <begin position="298"/>
        <end position="308"/>
    </location>
</feature>
<feature type="helix" evidence="14">
    <location>
        <begin position="310"/>
        <end position="349"/>
    </location>
</feature>
<feature type="strand" evidence="14">
    <location>
        <begin position="354"/>
        <end position="356"/>
    </location>
</feature>
<feature type="helix" evidence="14">
    <location>
        <begin position="361"/>
        <end position="368"/>
    </location>
</feature>
<feature type="helix" evidence="14">
    <location>
        <begin position="377"/>
        <end position="388"/>
    </location>
</feature>
<feature type="strand" evidence="14">
    <location>
        <begin position="390"/>
        <end position="394"/>
    </location>
</feature>
<feature type="helix" evidence="14">
    <location>
        <begin position="397"/>
        <end position="400"/>
    </location>
</feature>
<feature type="turn" evidence="14">
    <location>
        <begin position="404"/>
        <end position="408"/>
    </location>
</feature>
<feature type="strand" evidence="14">
    <location>
        <begin position="410"/>
        <end position="412"/>
    </location>
</feature>
<feature type="strand" evidence="14">
    <location>
        <begin position="419"/>
        <end position="424"/>
    </location>
</feature>
<feature type="turn" evidence="14">
    <location>
        <begin position="426"/>
        <end position="428"/>
    </location>
</feature>
<feature type="helix" evidence="14">
    <location>
        <begin position="429"/>
        <end position="439"/>
    </location>
</feature>
<feature type="strand" evidence="14">
    <location>
        <begin position="441"/>
        <end position="443"/>
    </location>
</feature>
<feature type="helix" evidence="14">
    <location>
        <begin position="444"/>
        <end position="465"/>
    </location>
</feature>
<feature type="turn" evidence="14">
    <location>
        <begin position="466"/>
        <end position="468"/>
    </location>
</feature>
<feature type="helix" evidence="14">
    <location>
        <begin position="469"/>
        <end position="471"/>
    </location>
</feature>
<feature type="helix" evidence="14">
    <location>
        <begin position="478"/>
        <end position="498"/>
    </location>
</feature>
<feature type="turn" evidence="14">
    <location>
        <begin position="501"/>
        <end position="503"/>
    </location>
</feature>
<feature type="strand" evidence="14">
    <location>
        <begin position="504"/>
        <end position="506"/>
    </location>
</feature>
<feature type="helix" evidence="14">
    <location>
        <begin position="507"/>
        <end position="527"/>
    </location>
</feature>
<feature type="helix" evidence="14">
    <location>
        <begin position="531"/>
        <end position="534"/>
    </location>
</feature>
<feature type="helix" evidence="14">
    <location>
        <begin position="535"/>
        <end position="538"/>
    </location>
</feature>
<feature type="helix" evidence="14">
    <location>
        <begin position="540"/>
        <end position="550"/>
    </location>
</feature>
<feature type="helix" evidence="14">
    <location>
        <begin position="552"/>
        <end position="561"/>
    </location>
</feature>
<feature type="helix" evidence="14">
    <location>
        <begin position="565"/>
        <end position="589"/>
    </location>
</feature>
<feature type="strand" evidence="14">
    <location>
        <begin position="590"/>
        <end position="592"/>
    </location>
</feature>
<feature type="strand" evidence="13">
    <location>
        <begin position="602"/>
        <end position="604"/>
    </location>
</feature>
<feature type="turn" evidence="14">
    <location>
        <begin position="605"/>
        <end position="607"/>
    </location>
</feature>
<feature type="strand" evidence="13">
    <location>
        <begin position="610"/>
        <end position="613"/>
    </location>
</feature>
<feature type="helix" evidence="13">
    <location>
        <begin position="615"/>
        <end position="617"/>
    </location>
</feature>
<feature type="strand" evidence="13">
    <location>
        <begin position="620"/>
        <end position="623"/>
    </location>
</feature>
<feature type="helix" evidence="14">
    <location>
        <begin position="626"/>
        <end position="628"/>
    </location>
</feature>
<feature type="helix" evidence="14">
    <location>
        <begin position="634"/>
        <end position="645"/>
    </location>
</feature>
<feature type="helix" evidence="14">
    <location>
        <begin position="650"/>
        <end position="660"/>
    </location>
</feature>
<feature type="helix" evidence="14">
    <location>
        <begin position="664"/>
        <end position="698"/>
    </location>
</feature>
<feature type="strand" evidence="14">
    <location>
        <begin position="710"/>
        <end position="716"/>
    </location>
</feature>
<feature type="helix" evidence="14">
    <location>
        <begin position="719"/>
        <end position="731"/>
    </location>
</feature>
<feature type="helix" evidence="14">
    <location>
        <begin position="736"/>
        <end position="750"/>
    </location>
</feature>
<feature type="strand" evidence="14">
    <location>
        <begin position="756"/>
        <end position="762"/>
    </location>
</feature>
<feature type="helix" evidence="14">
    <location>
        <begin position="766"/>
        <end position="773"/>
    </location>
</feature>
<feature type="helix" evidence="14">
    <location>
        <begin position="775"/>
        <end position="777"/>
    </location>
</feature>
<feature type="helix" evidence="14">
    <location>
        <begin position="779"/>
        <end position="793"/>
    </location>
</feature>
<reference key="1">
    <citation type="journal article" date="2002" name="Proc. Natl. Acad. Sci. U.S.A.">
        <title>Positional cloning of the murine flavivirus resistance gene.</title>
        <authorList>
            <person name="Perelygin A.A."/>
            <person name="Scherbik S.V."/>
            <person name="Zhulin I.B."/>
            <person name="Stockman B.M."/>
            <person name="Li Y."/>
            <person name="Brinton M.A."/>
        </authorList>
    </citation>
    <scope>NUCLEOTIDE SEQUENCE [MRNA] (ISOFORM 1)</scope>
    <source>
        <strain>C3H/He</strain>
    </source>
</reference>
<reference key="2">
    <citation type="journal article" date="2005" name="Science">
        <title>The transcriptional landscape of the mammalian genome.</title>
        <authorList>
            <person name="Carninci P."/>
            <person name="Kasukawa T."/>
            <person name="Katayama S."/>
            <person name="Gough J."/>
            <person name="Frith M.C."/>
            <person name="Maeda N."/>
            <person name="Oyama R."/>
            <person name="Ravasi T."/>
            <person name="Lenhard B."/>
            <person name="Wells C."/>
            <person name="Kodzius R."/>
            <person name="Shimokawa K."/>
            <person name="Bajic V.B."/>
            <person name="Brenner S.E."/>
            <person name="Batalov S."/>
            <person name="Forrest A.R."/>
            <person name="Zavolan M."/>
            <person name="Davis M.J."/>
            <person name="Wilming L.G."/>
            <person name="Aidinis V."/>
            <person name="Allen J.E."/>
            <person name="Ambesi-Impiombato A."/>
            <person name="Apweiler R."/>
            <person name="Aturaliya R.N."/>
            <person name="Bailey T.L."/>
            <person name="Bansal M."/>
            <person name="Baxter L."/>
            <person name="Beisel K.W."/>
            <person name="Bersano T."/>
            <person name="Bono H."/>
            <person name="Chalk A.M."/>
            <person name="Chiu K.P."/>
            <person name="Choudhary V."/>
            <person name="Christoffels A."/>
            <person name="Clutterbuck D.R."/>
            <person name="Crowe M.L."/>
            <person name="Dalla E."/>
            <person name="Dalrymple B.P."/>
            <person name="de Bono B."/>
            <person name="Della Gatta G."/>
            <person name="di Bernardo D."/>
            <person name="Down T."/>
            <person name="Engstrom P."/>
            <person name="Fagiolini M."/>
            <person name="Faulkner G."/>
            <person name="Fletcher C.F."/>
            <person name="Fukushima T."/>
            <person name="Furuno M."/>
            <person name="Futaki S."/>
            <person name="Gariboldi M."/>
            <person name="Georgii-Hemming P."/>
            <person name="Gingeras T.R."/>
            <person name="Gojobori T."/>
            <person name="Green R.E."/>
            <person name="Gustincich S."/>
            <person name="Harbers M."/>
            <person name="Hayashi Y."/>
            <person name="Hensch T.K."/>
            <person name="Hirokawa N."/>
            <person name="Hill D."/>
            <person name="Huminiecki L."/>
            <person name="Iacono M."/>
            <person name="Ikeo K."/>
            <person name="Iwama A."/>
            <person name="Ishikawa T."/>
            <person name="Jakt M."/>
            <person name="Kanapin A."/>
            <person name="Katoh M."/>
            <person name="Kawasawa Y."/>
            <person name="Kelso J."/>
            <person name="Kitamura H."/>
            <person name="Kitano H."/>
            <person name="Kollias G."/>
            <person name="Krishnan S.P."/>
            <person name="Kruger A."/>
            <person name="Kummerfeld S.K."/>
            <person name="Kurochkin I.V."/>
            <person name="Lareau L.F."/>
            <person name="Lazarevic D."/>
            <person name="Lipovich L."/>
            <person name="Liu J."/>
            <person name="Liuni S."/>
            <person name="McWilliam S."/>
            <person name="Madan Babu M."/>
            <person name="Madera M."/>
            <person name="Marchionni L."/>
            <person name="Matsuda H."/>
            <person name="Matsuzawa S."/>
            <person name="Miki H."/>
            <person name="Mignone F."/>
            <person name="Miyake S."/>
            <person name="Morris K."/>
            <person name="Mottagui-Tabar S."/>
            <person name="Mulder N."/>
            <person name="Nakano N."/>
            <person name="Nakauchi H."/>
            <person name="Ng P."/>
            <person name="Nilsson R."/>
            <person name="Nishiguchi S."/>
            <person name="Nishikawa S."/>
            <person name="Nori F."/>
            <person name="Ohara O."/>
            <person name="Okazaki Y."/>
            <person name="Orlando V."/>
            <person name="Pang K.C."/>
            <person name="Pavan W.J."/>
            <person name="Pavesi G."/>
            <person name="Pesole G."/>
            <person name="Petrovsky N."/>
            <person name="Piazza S."/>
            <person name="Reed J."/>
            <person name="Reid J.F."/>
            <person name="Ring B.Z."/>
            <person name="Ringwald M."/>
            <person name="Rost B."/>
            <person name="Ruan Y."/>
            <person name="Salzberg S.L."/>
            <person name="Sandelin A."/>
            <person name="Schneider C."/>
            <person name="Schoenbach C."/>
            <person name="Sekiguchi K."/>
            <person name="Semple C.A."/>
            <person name="Seno S."/>
            <person name="Sessa L."/>
            <person name="Sheng Y."/>
            <person name="Shibata Y."/>
            <person name="Shimada H."/>
            <person name="Shimada K."/>
            <person name="Silva D."/>
            <person name="Sinclair B."/>
            <person name="Sperling S."/>
            <person name="Stupka E."/>
            <person name="Sugiura K."/>
            <person name="Sultana R."/>
            <person name="Takenaka Y."/>
            <person name="Taki K."/>
            <person name="Tammoja K."/>
            <person name="Tan S.L."/>
            <person name="Tang S."/>
            <person name="Taylor M.S."/>
            <person name="Tegner J."/>
            <person name="Teichmann S.A."/>
            <person name="Ueda H.R."/>
            <person name="van Nimwegen E."/>
            <person name="Verardo R."/>
            <person name="Wei C.L."/>
            <person name="Yagi K."/>
            <person name="Yamanishi H."/>
            <person name="Zabarovsky E."/>
            <person name="Zhu S."/>
            <person name="Zimmer A."/>
            <person name="Hide W."/>
            <person name="Bult C."/>
            <person name="Grimmond S.M."/>
            <person name="Teasdale R.D."/>
            <person name="Liu E.T."/>
            <person name="Brusic V."/>
            <person name="Quackenbush J."/>
            <person name="Wahlestedt C."/>
            <person name="Mattick J.S."/>
            <person name="Hume D.A."/>
            <person name="Kai C."/>
            <person name="Sasaki D."/>
            <person name="Tomaru Y."/>
            <person name="Fukuda S."/>
            <person name="Kanamori-Katayama M."/>
            <person name="Suzuki M."/>
            <person name="Aoki J."/>
            <person name="Arakawa T."/>
            <person name="Iida J."/>
            <person name="Imamura K."/>
            <person name="Itoh M."/>
            <person name="Kato T."/>
            <person name="Kawaji H."/>
            <person name="Kawagashira N."/>
            <person name="Kawashima T."/>
            <person name="Kojima M."/>
            <person name="Kondo S."/>
            <person name="Konno H."/>
            <person name="Nakano K."/>
            <person name="Ninomiya N."/>
            <person name="Nishio T."/>
            <person name="Okada M."/>
            <person name="Plessy C."/>
            <person name="Shibata K."/>
            <person name="Shiraki T."/>
            <person name="Suzuki S."/>
            <person name="Tagami M."/>
            <person name="Waki K."/>
            <person name="Watahiki A."/>
            <person name="Okamura-Oho Y."/>
            <person name="Suzuki H."/>
            <person name="Kawai J."/>
            <person name="Hayashizaki Y."/>
        </authorList>
    </citation>
    <scope>NUCLEOTIDE SEQUENCE [LARGE SCALE MRNA] (ISOFORMS 1 AND 2)</scope>
    <source>
        <strain>C57BL/6J</strain>
    </source>
</reference>
<reference key="3">
    <citation type="journal article" date="2004" name="Genome Res.">
        <title>The status, quality, and expansion of the NIH full-length cDNA project: the Mammalian Gene Collection (MGC).</title>
        <authorList>
            <consortium name="The MGC Project Team"/>
        </authorList>
    </citation>
    <scope>NUCLEOTIDE SEQUENCE [LARGE SCALE MRNA] (ISOFORM 1)</scope>
    <source>
        <strain>C57BL/6J</strain>
        <tissue>Brain</tissue>
    </source>
</reference>
<reference key="4">
    <citation type="journal article" date="2003" name="DNA Res.">
        <title>Prediction of the coding sequences of mouse homologues of KIAA gene: III. The complete nucleotide sequences of 500 mouse KIAA-homologous cDNAs identified by screening of terminal sequences of cDNA clones randomly sampled from size-fractionated libraries.</title>
        <authorList>
            <person name="Okazaki N."/>
            <person name="Kikuno R."/>
            <person name="Ohara R."/>
            <person name="Inamoto S."/>
            <person name="Koseki H."/>
            <person name="Hiraoka S."/>
            <person name="Saga Y."/>
            <person name="Nagase T."/>
            <person name="Ohara O."/>
            <person name="Koga H."/>
        </authorList>
    </citation>
    <scope>NUCLEOTIDE SEQUENCE [LARGE SCALE MRNA] OF 228-817 (ISOFORM 1)</scope>
    <source>
        <tissue>Embryonic tail</tissue>
    </source>
</reference>
<reference key="5">
    <citation type="submission" date="2005-01" db="EMBL/GenBank/DDBJ databases">
        <authorList>
            <person name="Okazaki N."/>
            <person name="Kikuno R.F."/>
            <person name="Nagase T."/>
            <person name="Ohara O."/>
            <person name="Koga H."/>
        </authorList>
    </citation>
    <scope>SEQUENCE REVISION</scope>
</reference>
<reference key="6">
    <citation type="journal article" date="2010" name="Cell">
        <title>A tissue-specific atlas of mouse protein phosphorylation and expression.</title>
        <authorList>
            <person name="Huttlin E.L."/>
            <person name="Jedrychowski M.P."/>
            <person name="Elias J.E."/>
            <person name="Goswami T."/>
            <person name="Rad R."/>
            <person name="Beausoleil S.A."/>
            <person name="Villen J."/>
            <person name="Haas W."/>
            <person name="Sowa M.E."/>
            <person name="Gygi S.P."/>
        </authorList>
    </citation>
    <scope>IDENTIFICATION BY MASS SPECTROMETRY [LARGE SCALE ANALYSIS]</scope>
    <source>
        <tissue>Kidney</tissue>
    </source>
</reference>
<reference key="7">
    <citation type="journal article" date="2012" name="Cell">
        <title>TPC proteins are phosphoinositide- activated sodium-selective ion channels in endosomes and lysosomes.</title>
        <authorList>
            <person name="Wang X."/>
            <person name="Zhang X."/>
            <person name="Dong X.P."/>
            <person name="Samie M."/>
            <person name="Li X."/>
            <person name="Cheng X."/>
            <person name="Goschka A."/>
            <person name="Shen D."/>
            <person name="Zhou Y."/>
            <person name="Harlow J."/>
            <person name="Zhu M.X."/>
            <person name="Clapham D.E."/>
            <person name="Ren D."/>
            <person name="Xu H."/>
        </authorList>
    </citation>
    <scope>FUNCTION</scope>
</reference>
<reference key="8">
    <citation type="journal article" date="2013" name="Cell">
        <title>mTOR regulates lysosomal ATP-sensitive two-pore Na(+) channels to adapt to metabolic state.</title>
        <authorList>
            <person name="Cang C."/>
            <person name="Zhou Y."/>
            <person name="Navarro B."/>
            <person name="Seo Y.J."/>
            <person name="Aranda K."/>
            <person name="Shi L."/>
            <person name="Battaglia-Hsu S."/>
            <person name="Nissim I."/>
            <person name="Clapham D.E."/>
            <person name="Ren D."/>
        </authorList>
    </citation>
    <scope>FUNCTION</scope>
    <scope>DISRUPTION PHENOTYPE</scope>
</reference>
<reference key="9">
    <citation type="journal article" date="2014" name="Nat. Chem. Biol.">
        <title>The voltage-gated sodium channel TPC1 confers endolysosomal excitability.</title>
        <authorList>
            <person name="Cang C."/>
            <person name="Bekele B."/>
            <person name="Ren D."/>
        </authorList>
    </citation>
    <scope>FUNCTION</scope>
    <scope>CATALYTIC ACTIVITY</scope>
</reference>
<reference key="10">
    <citation type="journal article" date="2015" name="Science">
        <title>Ebola virus. Two-pore channels control Ebola virus host cell entry and are drug targets for disease treatment.</title>
        <authorList>
            <person name="Sakurai Y."/>
            <person name="Kolokoltsov A.A."/>
            <person name="Chen C.C."/>
            <person name="Tidwell M.W."/>
            <person name="Bauta W.E."/>
            <person name="Klugbauer N."/>
            <person name="Grimm C."/>
            <person name="Wahl-Schott C."/>
            <person name="Biel M."/>
            <person name="Davey R.A."/>
        </authorList>
    </citation>
    <scope>FUNCTION (MICROBIAL INFECTION)</scope>
</reference>
<reference key="11">
    <citation type="journal article" date="2017" name="Sci. Rep.">
        <title>The two-pore channel TPC1 is required for efficient protein processing through early and recycling endosomes.</title>
        <authorList>
            <person name="Castonguay J."/>
            <person name="Orth J.H.C."/>
            <person name="Mueller T."/>
            <person name="Sleman F."/>
            <person name="Grimm C."/>
            <person name="Wahl-Schott C."/>
            <person name="Biel M."/>
            <person name="Mallmann R.T."/>
            <person name="Bildl W."/>
            <person name="Schulte U."/>
            <person name="Klugbauer N."/>
        </authorList>
    </citation>
    <scope>FUNCTION</scope>
    <scope>SUBCELLULAR LOCATION</scope>
    <scope>INTERACTION WITH STX7; STX8 AND STX12</scope>
    <scope>TISSUE SPECIFICITY</scope>
    <scope>GLYCOSYLATION</scope>
</reference>
<dbReference type="EMBL" id="AF217002">
    <property type="protein sequence ID" value="AAG44100.1"/>
    <property type="molecule type" value="mRNA"/>
</dbReference>
<dbReference type="EMBL" id="AK077411">
    <property type="protein sequence ID" value="BAE43360.1"/>
    <property type="molecule type" value="mRNA"/>
</dbReference>
<dbReference type="EMBL" id="AK148129">
    <property type="protein sequence ID" value="BAE28363.1"/>
    <property type="molecule type" value="mRNA"/>
</dbReference>
<dbReference type="EMBL" id="BC058951">
    <property type="protein sequence ID" value="AAH58951.1"/>
    <property type="molecule type" value="mRNA"/>
</dbReference>
<dbReference type="EMBL" id="AK129303">
    <property type="protein sequence ID" value="BAC98113.2"/>
    <property type="molecule type" value="Transcribed_RNA"/>
</dbReference>
<dbReference type="CCDS" id="CCDS39239.1">
    <molecule id="Q9EQJ0-1"/>
</dbReference>
<dbReference type="RefSeq" id="NP_001405185.1">
    <molecule id="Q9EQJ0-1"/>
    <property type="nucleotide sequence ID" value="NM_001418256.1"/>
</dbReference>
<dbReference type="RefSeq" id="NP_665852.1">
    <molecule id="Q9EQJ0-1"/>
    <property type="nucleotide sequence ID" value="NM_145853.3"/>
</dbReference>
<dbReference type="RefSeq" id="XP_011246503.1">
    <property type="nucleotide sequence ID" value="XM_011248201.2"/>
</dbReference>
<dbReference type="RefSeq" id="XP_030110373.1">
    <molecule id="Q9EQJ0-1"/>
    <property type="nucleotide sequence ID" value="XM_030254513.1"/>
</dbReference>
<dbReference type="PDB" id="6C96">
    <property type="method" value="EM"/>
    <property type="resolution" value="3.40 A"/>
    <property type="chains" value="A/B=1-817"/>
</dbReference>
<dbReference type="PDB" id="6C9A">
    <property type="method" value="EM"/>
    <property type="resolution" value="3.20 A"/>
    <property type="chains" value="A/B=1-817"/>
</dbReference>
<dbReference type="PDBsum" id="6C96"/>
<dbReference type="PDBsum" id="6C9A"/>
<dbReference type="EMDB" id="EMD-7434"/>
<dbReference type="EMDB" id="EMD-7435"/>
<dbReference type="SMR" id="Q9EQJ0"/>
<dbReference type="BioGRID" id="232984">
    <property type="interactions" value="1"/>
</dbReference>
<dbReference type="FunCoup" id="Q9EQJ0">
    <property type="interactions" value="664"/>
</dbReference>
<dbReference type="STRING" id="10090.ENSMUSP00000042188"/>
<dbReference type="TCDB" id="1.A.1.11.22">
    <property type="family name" value="the voltage-gated ion channel (vic) superfamily"/>
</dbReference>
<dbReference type="GlyCosmos" id="Q9EQJ0">
    <property type="glycosylation" value="1 site, No reported glycans"/>
</dbReference>
<dbReference type="GlyGen" id="Q9EQJ0">
    <property type="glycosylation" value="4 sites, 1 N-linked glycan (1 site)"/>
</dbReference>
<dbReference type="iPTMnet" id="Q9EQJ0"/>
<dbReference type="PhosphoSitePlus" id="Q9EQJ0"/>
<dbReference type="SwissPalm" id="Q9EQJ0"/>
<dbReference type="jPOST" id="Q9EQJ0"/>
<dbReference type="PaxDb" id="10090-ENSMUSP00000042188"/>
<dbReference type="ProteomicsDB" id="259162">
    <molecule id="Q9EQJ0-1"/>
</dbReference>
<dbReference type="ProteomicsDB" id="259163">
    <molecule id="Q9EQJ0-2"/>
</dbReference>
<dbReference type="Pumba" id="Q9EQJ0"/>
<dbReference type="Antibodypedia" id="31242">
    <property type="antibodies" value="76 antibodies from 19 providers"/>
</dbReference>
<dbReference type="DNASU" id="252972"/>
<dbReference type="Ensembl" id="ENSMUST00000046426.10">
    <molecule id="Q9EQJ0-1"/>
    <property type="protein sequence ID" value="ENSMUSP00000042188.9"/>
    <property type="gene ID" value="ENSMUSG00000032741.10"/>
</dbReference>
<dbReference type="GeneID" id="252972"/>
<dbReference type="KEGG" id="mmu:252972"/>
<dbReference type="UCSC" id="uc008zhl.1">
    <molecule id="Q9EQJ0-1"/>
    <property type="organism name" value="mouse"/>
</dbReference>
<dbReference type="UCSC" id="uc008zhn.1">
    <molecule id="Q9EQJ0-2"/>
    <property type="organism name" value="mouse"/>
</dbReference>
<dbReference type="AGR" id="MGI:2182472"/>
<dbReference type="CTD" id="53373"/>
<dbReference type="MGI" id="MGI:2182472">
    <property type="gene designation" value="Tpcn1"/>
</dbReference>
<dbReference type="VEuPathDB" id="HostDB:ENSMUSG00000032741"/>
<dbReference type="eggNOG" id="KOG2301">
    <property type="taxonomic scope" value="Eukaryota"/>
</dbReference>
<dbReference type="GeneTree" id="ENSGT00940000158958"/>
<dbReference type="HOGENOM" id="CLU_019500_0_0_1"/>
<dbReference type="InParanoid" id="Q9EQJ0"/>
<dbReference type="OMA" id="MCSTAIV"/>
<dbReference type="OrthoDB" id="10068803at2759"/>
<dbReference type="PhylomeDB" id="Q9EQJ0"/>
<dbReference type="TreeFam" id="TF328550"/>
<dbReference type="Reactome" id="R-MMU-2672351">
    <property type="pathway name" value="Stimuli-sensing channels"/>
</dbReference>
<dbReference type="BioGRID-ORCS" id="252972">
    <property type="hits" value="2 hits in 78 CRISPR screens"/>
</dbReference>
<dbReference type="ChiTaRS" id="Tpcn1">
    <property type="organism name" value="mouse"/>
</dbReference>
<dbReference type="PRO" id="PR:Q9EQJ0"/>
<dbReference type="Proteomes" id="UP000000589">
    <property type="component" value="Chromosome 5"/>
</dbReference>
<dbReference type="RNAct" id="Q9EQJ0">
    <property type="molecule type" value="protein"/>
</dbReference>
<dbReference type="Bgee" id="ENSMUSG00000032741">
    <property type="expression patterns" value="Expressed in lacrimal gland and 226 other cell types or tissues"/>
</dbReference>
<dbReference type="GO" id="GO:0031901">
    <property type="term" value="C:early endosome membrane"/>
    <property type="evidence" value="ECO:0000314"/>
    <property type="project" value="UniProtKB"/>
</dbReference>
<dbReference type="GO" id="GO:0036019">
    <property type="term" value="C:endolysosome"/>
    <property type="evidence" value="ECO:0000314"/>
    <property type="project" value="UniProtKB"/>
</dbReference>
<dbReference type="GO" id="GO:0010008">
    <property type="term" value="C:endosome membrane"/>
    <property type="evidence" value="ECO:0000250"/>
    <property type="project" value="UniProtKB"/>
</dbReference>
<dbReference type="GO" id="GO:0005765">
    <property type="term" value="C:lysosomal membrane"/>
    <property type="evidence" value="ECO:0000250"/>
    <property type="project" value="UniProtKB"/>
</dbReference>
<dbReference type="GO" id="GO:0016020">
    <property type="term" value="C:membrane"/>
    <property type="evidence" value="ECO:0000314"/>
    <property type="project" value="UniProtKB"/>
</dbReference>
<dbReference type="GO" id="GO:0034702">
    <property type="term" value="C:monoatomic ion channel complex"/>
    <property type="evidence" value="ECO:0007669"/>
    <property type="project" value="UniProtKB-KW"/>
</dbReference>
<dbReference type="GO" id="GO:0055038">
    <property type="term" value="C:recycling endosome membrane"/>
    <property type="evidence" value="ECO:0000314"/>
    <property type="project" value="UniProtKB"/>
</dbReference>
<dbReference type="GO" id="GO:0097682">
    <property type="term" value="F:intracellularly phosphatidylinositol-3,5-bisphosphate-gated monatomic cation channel activity"/>
    <property type="evidence" value="ECO:0000314"/>
    <property type="project" value="UniProtKB"/>
</dbReference>
<dbReference type="GO" id="GO:0015280">
    <property type="term" value="F:ligand-gated sodium channel activity"/>
    <property type="evidence" value="ECO:0000314"/>
    <property type="project" value="UniProtKB"/>
</dbReference>
<dbReference type="GO" id="GO:0072345">
    <property type="term" value="F:NAADP-sensitive calcium-release channel activity"/>
    <property type="evidence" value="ECO:0000250"/>
    <property type="project" value="UniProtKB"/>
</dbReference>
<dbReference type="GO" id="GO:0080025">
    <property type="term" value="F:phosphatidylinositol-3,5-bisphosphate binding"/>
    <property type="evidence" value="ECO:0000314"/>
    <property type="project" value="UniProtKB"/>
</dbReference>
<dbReference type="GO" id="GO:0042803">
    <property type="term" value="F:protein homodimerization activity"/>
    <property type="evidence" value="ECO:0000314"/>
    <property type="project" value="UniProtKB"/>
</dbReference>
<dbReference type="GO" id="GO:0019905">
    <property type="term" value="F:syntaxin binding"/>
    <property type="evidence" value="ECO:0000353"/>
    <property type="project" value="UniProtKB"/>
</dbReference>
<dbReference type="GO" id="GO:0022832">
    <property type="term" value="F:voltage-gated channel activity"/>
    <property type="evidence" value="ECO:0007669"/>
    <property type="project" value="InterPro"/>
</dbReference>
<dbReference type="GO" id="GO:0005248">
    <property type="term" value="F:voltage-gated sodium channel activity"/>
    <property type="evidence" value="ECO:0000314"/>
    <property type="project" value="UniProtKB"/>
</dbReference>
<dbReference type="GO" id="GO:0075509">
    <property type="term" value="P:endocytosis involved in viral entry into host cell"/>
    <property type="evidence" value="ECO:0000315"/>
    <property type="project" value="UniProtKB"/>
</dbReference>
<dbReference type="GO" id="GO:0010508">
    <property type="term" value="P:positive regulation of autophagy"/>
    <property type="evidence" value="ECO:0007669"/>
    <property type="project" value="Ensembl"/>
</dbReference>
<dbReference type="GO" id="GO:0035725">
    <property type="term" value="P:sodium ion transmembrane transport"/>
    <property type="evidence" value="ECO:0000314"/>
    <property type="project" value="UniProtKB"/>
</dbReference>
<dbReference type="FunFam" id="1.10.287.70:FF:000062">
    <property type="entry name" value="Two pore calcium channel protein 1"/>
    <property type="match status" value="1"/>
</dbReference>
<dbReference type="FunFam" id="1.10.287.70:FF:000071">
    <property type="entry name" value="Two pore calcium channel protein 1"/>
    <property type="match status" value="1"/>
</dbReference>
<dbReference type="FunFam" id="1.20.120.350:FF:000031">
    <property type="entry name" value="Two pore calcium channel protein 1"/>
    <property type="match status" value="1"/>
</dbReference>
<dbReference type="Gene3D" id="1.10.287.70">
    <property type="match status" value="2"/>
</dbReference>
<dbReference type="Gene3D" id="1.20.120.350">
    <property type="entry name" value="Voltage-gated potassium channels. Chain C"/>
    <property type="match status" value="1"/>
</dbReference>
<dbReference type="InterPro" id="IPR005821">
    <property type="entry name" value="Ion_trans_dom"/>
</dbReference>
<dbReference type="InterPro" id="IPR028801">
    <property type="entry name" value="TPC1_animal"/>
</dbReference>
<dbReference type="InterPro" id="IPR027359">
    <property type="entry name" value="Volt_channel_dom_sf"/>
</dbReference>
<dbReference type="PANTHER" id="PTHR46474">
    <property type="entry name" value="TWO PORE CALCIUM CHANNEL PROTEIN 1"/>
    <property type="match status" value="1"/>
</dbReference>
<dbReference type="PANTHER" id="PTHR46474:SF1">
    <property type="entry name" value="TWO PORE CHANNEL PROTEIN 1"/>
    <property type="match status" value="1"/>
</dbReference>
<dbReference type="Pfam" id="PF00520">
    <property type="entry name" value="Ion_trans"/>
    <property type="match status" value="2"/>
</dbReference>
<dbReference type="SUPFAM" id="SSF81324">
    <property type="entry name" value="Voltage-gated potassium channels"/>
    <property type="match status" value="2"/>
</dbReference>
<sequence>MAVSLDDDVPLILTLDEAESAPLPPSNSLGQEQLPSKNGGSHSIHNSQVPSLVSGADSPPSSPTGHNWEMNYQEAAIYLQEGQNNDKFFTHPKDARALAAYLFVHNHFFYMMELLTALLLLLLSLCESPAVPVLKLHTYVHATLELFALMVVVFELCMKLRWLGFHTFVRHKRTMVKTSVLVVQFIEAIVVLVRQTSHVRVTRALRCIFLVDCRYCGGVRRNLRQIFQSLPPFMDILLLLLFFMIIFAILGFYLFSTNPSDPYFSTLENSIVNLFVLLTTANFPDVMMPSYSRNPWSCVFFIVYLSIELYFIMNLLLAVVFDTFNDIEKHKFKSLLLHKRTAIQHAYGLLASQRRPAGISYRQFEGLMRFYKPRMSARERFLTFKALNQSNTPLLSLKDFYDIYEVAALQWKAKRNRQHWFDELPRTAFLIFKGINILVNSKAFQYFMYLVVAVNGVWILVETFMLKGGNFTSKHVPWSYLVFLTIYGVELFMKVAGLGPVEYLSSGWNLFDFSVTAFAFLGLLALTLNMEPFYFIVVLRPLQLLRLFKLKKRYRNVLDTMFELLPRMASLGLTLLTFYYSFAIVGMEFFNGRLTPNCCNTSTVADAYRFINHTVGNKTKVEEGYYYLNNFDNILNSFVTLFELTVVNNWYIIMEGVTSQTSHWSRLYFMTFYIVTMVVMTIIVAFILEAFVFRMNYSRKSQDSEVDSGIVIEKEMSKEELMAVLELYREERGTSSDVTRLLDTLSQMEKYQQNSMVFLGRRSRTKSDLSLKMYQEEIQEWYEEHAREQEQQKLRGSVPGPAAQQPPGSRQRSQTVT</sequence>
<gene>
    <name evidence="12" type="primary">Tpcn1</name>
    <name type="synonym">Kiaa1169</name>
    <name evidence="10" type="synonym">Tpc1</name>
</gene>
<accession>Q9EQJ0</accession>
<accession>Q3V2Z6</accession>
<accession>Q6ZPW5</accession>
<comment type="function">
    <text evidence="1 5 6 7 8">Intracellular channel initially characterized as a non-selective Ca(2+)-permeable channel activated by NAADP (nicotinic acid adenine dinucleotide phosphate), it is also a voltage-gated highly-selective Na(+) channel activated directly by PI(3,5)P2 (phosphatidylinositol 3,5-bisphosphate) that senses pH changes and confers electrical excitability to organelles (PubMed:23063126, PubMed:23394946, PubMed:24776928). Localizes to the early and recycling endosomes membranes where it plays a role in the uptake and processing of proteins and regulates organellar membrane excitability, membrane trafficking and pH homeostasis (PubMed:28855648). Ion selectivity is not fixed but rather agonist-dependent and under defined ionic conditions, can be readily activated by both NAADP and PI(3,5)P2 (By similarity). Required for mTOR-dependent nutrient sensing (PubMed:23394946).</text>
</comment>
<comment type="catalytic activity">
    <reaction evidence="7">
        <text>Na(+)(in) = Na(+)(out)</text>
        <dbReference type="Rhea" id="RHEA:34963"/>
        <dbReference type="ChEBI" id="CHEBI:29101"/>
    </reaction>
    <physiologicalReaction direction="right-to-left" evidence="7">
        <dbReference type="Rhea" id="RHEA:34965"/>
    </physiologicalReaction>
</comment>
<comment type="catalytic activity">
    <reaction evidence="2">
        <text>Ca(2+)(in) = Ca(2+)(out)</text>
        <dbReference type="Rhea" id="RHEA:29671"/>
        <dbReference type="ChEBI" id="CHEBI:29108"/>
    </reaction>
    <physiologicalReaction direction="right-to-left" evidence="2">
        <dbReference type="Rhea" id="RHEA:29673"/>
    </physiologicalReaction>
</comment>
<comment type="activity regulation">
    <text evidence="1 2">Na(+) current is inhibited by ATP in a MTORC-dependent manner. ATP sensitivity is independent of PI(3,5)P2 (By similarity). Probably regulated by Mg(2+) ions, cytosolic Mg(2+) selectively inhibits outward current while lysosomal Mg(2+) modestly inhibits both the outward and inward currents. In the absence of Mg(2+), NAADP readily activates TPCN2, with properties similar to PI(3,5)P2 (By similarity). Both current elicited by PI(3,5)P2 as well as NAADP are inhibited by tetrandrine (By similarity).</text>
</comment>
<comment type="subunit">
    <text evidence="2 8">Dimer. Interacts with MTOR; the interaction is required for TPCN1 ATP sensitivity (By similarity). Interacts with STX7, STX8 and STX12 (PubMed:28855648). Interacts with JPT2 (By similarity). Found in a complex with LSM12, TPCN1 and TPCN2 (By similarity).</text>
</comment>
<comment type="subcellular location">
    <subcellularLocation>
        <location evidence="2">Lysosome membrane</location>
        <topology evidence="2">Multi-pass membrane protein</topology>
    </subcellularLocation>
    <subcellularLocation>
        <location evidence="2">Endosome membrane</location>
        <topology evidence="2">Multi-pass membrane protein</topology>
    </subcellularLocation>
    <subcellularLocation>
        <location evidence="8">Early endosome membrane</location>
        <topology evidence="8">Multi-pass membrane protein</topology>
    </subcellularLocation>
    <subcellularLocation>
        <location evidence="8">Recycling endosome membrane</location>
        <topology evidence="8">Multi-pass membrane protein</topology>
    </subcellularLocation>
</comment>
<comment type="alternative products">
    <event type="alternative splicing"/>
    <isoform>
        <id>Q9EQJ0-1</id>
        <name>1</name>
        <sequence type="displayed"/>
    </isoform>
    <isoform>
        <id>Q9EQJ0-2</id>
        <name>2</name>
        <sequence type="described" ref="VSP_023006 VSP_023007"/>
    </isoform>
</comment>
<comment type="tissue specificity">
    <text evidence="8">Mainly expressed in epithelial tissues like lung, kidney, colon, spleen and liver (at protein level).</text>
</comment>
<comment type="domain">
    <text evidence="2">Each of the two internal repeats contains five hydrophobic transmembrane segments (S1, S2, S3, S5, S6) and one positively charged transmembrane segment (S4). S4 segments represent the voltage-sensor and are characterized by a series of positively charged amino acids at every third position.</text>
</comment>
<comment type="PTM">
    <text evidence="8">N-glycosylated.</text>
</comment>
<comment type="disruption phenotype">
    <text evidence="6">TPCN1 and TPCN2 double knockouts are viable, fertile, have no obvious morphological abnormalities, and no obvious behavioral defects. After fasting for 3 days, they are less active and endurance performance is reduced by 8.3 fold in contrast to wild-type littermates that show no changes. Two days after re-introduction of food, mutants regain endurance and become as active as before fasting.</text>
</comment>
<comment type="similarity">
    <text evidence="11">Belongs to the calcium channel alpha-1 subunit (TC 1.A.1.11) family. Two pore calcium channel subfamily.</text>
</comment>
<proteinExistence type="evidence at protein level"/>
<name>TPC1_MOUSE</name>
<organism>
    <name type="scientific">Mus musculus</name>
    <name type="common">Mouse</name>
    <dbReference type="NCBI Taxonomy" id="10090"/>
    <lineage>
        <taxon>Eukaryota</taxon>
        <taxon>Metazoa</taxon>
        <taxon>Chordata</taxon>
        <taxon>Craniata</taxon>
        <taxon>Vertebrata</taxon>
        <taxon>Euteleostomi</taxon>
        <taxon>Mammalia</taxon>
        <taxon>Eutheria</taxon>
        <taxon>Euarchontoglires</taxon>
        <taxon>Glires</taxon>
        <taxon>Rodentia</taxon>
        <taxon>Myomorpha</taxon>
        <taxon>Muroidea</taxon>
        <taxon>Muridae</taxon>
        <taxon>Murinae</taxon>
        <taxon>Mus</taxon>
        <taxon>Mus</taxon>
    </lineage>
</organism>
<keyword id="KW-0002">3D-structure</keyword>
<keyword id="KW-0025">Alternative splicing</keyword>
<keyword id="KW-0106">Calcium</keyword>
<keyword id="KW-0107">Calcium channel</keyword>
<keyword id="KW-0109">Calcium transport</keyword>
<keyword id="KW-0175">Coiled coil</keyword>
<keyword id="KW-0967">Endosome</keyword>
<keyword id="KW-0325">Glycoprotein</keyword>
<keyword id="KW-0407">Ion channel</keyword>
<keyword id="KW-0406">Ion transport</keyword>
<keyword id="KW-0458">Lysosome</keyword>
<keyword id="KW-0472">Membrane</keyword>
<keyword id="KW-1185">Reference proteome</keyword>
<keyword id="KW-0677">Repeat</keyword>
<keyword id="KW-0812">Transmembrane</keyword>
<keyword id="KW-1133">Transmembrane helix</keyword>
<keyword id="KW-0813">Transport</keyword>
<keyword id="KW-0851">Voltage-gated channel</keyword>